<dbReference type="EMBL" id="M23696">
    <property type="protein sequence ID" value="AAA53251.1"/>
    <property type="molecule type" value="Genomic_DNA"/>
</dbReference>
<dbReference type="EMBL" id="Z48954">
    <property type="protein sequence ID" value="CAA88813.1"/>
    <property type="molecule type" value="Genomic_DNA"/>
</dbReference>
<dbReference type="EMBL" id="AF104384">
    <property type="protein sequence ID" value="AAF14145.1"/>
    <property type="molecule type" value="Genomic_DNA"/>
</dbReference>
<dbReference type="PIR" id="G31830">
    <property type="entry name" value="ERAD77"/>
</dbReference>
<dbReference type="RefSeq" id="AP_000560.1">
    <property type="nucleotide sequence ID" value="AC_000018.1"/>
</dbReference>
<dbReference type="GO" id="GO:0044167">
    <property type="term" value="C:host cell endoplasmic reticulum membrane"/>
    <property type="evidence" value="ECO:0007669"/>
    <property type="project" value="UniProtKB-SubCell"/>
</dbReference>
<dbReference type="GO" id="GO:0016020">
    <property type="term" value="C:membrane"/>
    <property type="evidence" value="ECO:0007669"/>
    <property type="project" value="UniProtKB-KW"/>
</dbReference>
<dbReference type="InterPro" id="IPR005041">
    <property type="entry name" value="Adeno_E3B"/>
</dbReference>
<dbReference type="Pfam" id="PF03376">
    <property type="entry name" value="Adeno_E3B"/>
    <property type="match status" value="1"/>
</dbReference>
<organismHost>
    <name type="scientific">Homo sapiens</name>
    <name type="common">Human</name>
    <dbReference type="NCBI Taxonomy" id="9606"/>
</organismHost>
<sequence>MIPRNFFFTILICAFNVCATFTAVATASPDCIGPFASYALFAFVTCICVCSIVCLVINFFQLVDWIFVRIAYLRHHPEYRNQNVAALLRLI</sequence>
<keyword id="KW-0244">Early protein</keyword>
<keyword id="KW-1038">Host endoplasmic reticulum</keyword>
<keyword id="KW-1043">Host membrane</keyword>
<keyword id="KW-0472">Membrane</keyword>
<keyword id="KW-0732">Signal</keyword>
<keyword id="KW-0812">Transmembrane</keyword>
<keyword id="KW-1133">Transmembrane helix</keyword>
<accession>P15134</accession>
<evidence type="ECO:0000250" key="1"/>
<evidence type="ECO:0000255" key="2"/>
<evidence type="ECO:0000305" key="3"/>
<protein>
    <recommendedName>
        <fullName>Early E3B 10.4 kDa protein</fullName>
    </recommendedName>
</protein>
<proteinExistence type="inferred from homology"/>
<reference key="1">
    <citation type="journal article" date="1988" name="Virology">
        <title>Characterization of the early region 3 and fiber genes of Ad7.</title>
        <authorList>
            <person name="Hong J.S."/>
            <person name="Mullis K.G."/>
            <person name="Engler J.A."/>
        </authorList>
    </citation>
    <scope>NUCLEOTIDE SEQUENCE [GENOMIC DNA]</scope>
    <source>
        <strain>Gomen</strain>
    </source>
</reference>
<reference key="2">
    <citation type="submission" date="1995-04" db="EMBL/GenBank/DDBJ databases">
        <authorList>
            <person name="Kajon A.E."/>
            <person name="Wadell G."/>
        </authorList>
    </citation>
    <scope>NUCLEOTIDE SEQUENCE [GENOMIC DNA]</scope>
    <source>
        <strain>87-922</strain>
    </source>
</reference>
<reference key="3">
    <citation type="submission" date="1998-11" db="EMBL/GenBank/DDBJ databases">
        <title>Epidemiology and genomic analysis of hexon, fiber and E3 region genes of adenovirus type 7 in Japan.</title>
        <authorList>
            <person name="Inada T."/>
            <person name="Mukoyama A."/>
            <person name="Yamadera S."/>
            <person name="Hashido M."/>
            <person name="Inoue S."/>
        </authorList>
    </citation>
    <scope>NUCLEOTIDE SEQUENCE [GENOMIC DNA]</scope>
    <source>
        <strain>bal</strain>
    </source>
</reference>
<name>E310_ADE07</name>
<organism>
    <name type="scientific">Human adenovirus B serotype 7</name>
    <name type="common">HAdV-7</name>
    <name type="synonym">Human adenovirus 7</name>
    <dbReference type="NCBI Taxonomy" id="10519"/>
    <lineage>
        <taxon>Viruses</taxon>
        <taxon>Varidnaviria</taxon>
        <taxon>Bamfordvirae</taxon>
        <taxon>Preplasmiviricota</taxon>
        <taxon>Tectiliviricetes</taxon>
        <taxon>Rowavirales</taxon>
        <taxon>Adenoviridae</taxon>
        <taxon>Mastadenovirus</taxon>
        <taxon>Human mastadenovirus B</taxon>
    </lineage>
</organism>
<comment type="function">
    <text>Down-regulates the EGF receptor.</text>
</comment>
<comment type="subcellular location">
    <subcellularLocation>
        <location evidence="3">Host endoplasmic reticulum membrane</location>
        <topology evidence="3">Single-pass type I membrane protein</topology>
    </subcellularLocation>
</comment>
<comment type="similarity">
    <text evidence="3">Belongs to the adenoviridae E3B family.</text>
</comment>
<feature type="signal peptide" evidence="1">
    <location>
        <begin position="1"/>
        <end position="22"/>
    </location>
</feature>
<feature type="chain" id="PRO_0000036474" description="Early E3B 10.4 kDa protein">
    <location>
        <begin position="23"/>
        <end position="91"/>
    </location>
</feature>
<feature type="topological domain" description="Lumenal" evidence="2">
    <location>
        <begin position="23"/>
        <end position="34"/>
    </location>
</feature>
<feature type="transmembrane region" description="Helical" evidence="2">
    <location>
        <begin position="35"/>
        <end position="60"/>
    </location>
</feature>
<feature type="topological domain" description="Cytoplasmic" evidence="2">
    <location>
        <begin position="61"/>
        <end position="91"/>
    </location>
</feature>